<proteinExistence type="inferred from homology"/>
<dbReference type="EC" id="7.4.2.11" evidence="1"/>
<dbReference type="EMBL" id="AE017198">
    <property type="protein sequence ID" value="AAS09173.1"/>
    <property type="molecule type" value="Genomic_DNA"/>
</dbReference>
<dbReference type="RefSeq" id="WP_011162165.1">
    <property type="nucleotide sequence ID" value="NC_005362.1"/>
</dbReference>
<dbReference type="SMR" id="Q74IV9"/>
<dbReference type="KEGG" id="ljo:LJ_1407"/>
<dbReference type="PATRIC" id="fig|257314.6.peg.1221"/>
<dbReference type="eggNOG" id="COG1135">
    <property type="taxonomic scope" value="Bacteria"/>
</dbReference>
<dbReference type="HOGENOM" id="CLU_000604_1_3_9"/>
<dbReference type="Proteomes" id="UP000000581">
    <property type="component" value="Chromosome"/>
</dbReference>
<dbReference type="GO" id="GO:0005886">
    <property type="term" value="C:plasma membrane"/>
    <property type="evidence" value="ECO:0007669"/>
    <property type="project" value="UniProtKB-SubCell"/>
</dbReference>
<dbReference type="GO" id="GO:0033232">
    <property type="term" value="F:ABC-type D-methionine transporter activity"/>
    <property type="evidence" value="ECO:0007669"/>
    <property type="project" value="UniProtKB-EC"/>
</dbReference>
<dbReference type="GO" id="GO:0005524">
    <property type="term" value="F:ATP binding"/>
    <property type="evidence" value="ECO:0007669"/>
    <property type="project" value="UniProtKB-KW"/>
</dbReference>
<dbReference type="GO" id="GO:0016887">
    <property type="term" value="F:ATP hydrolysis activity"/>
    <property type="evidence" value="ECO:0007669"/>
    <property type="project" value="InterPro"/>
</dbReference>
<dbReference type="CDD" id="cd03258">
    <property type="entry name" value="ABC_MetN_methionine_transporter"/>
    <property type="match status" value="1"/>
</dbReference>
<dbReference type="Gene3D" id="3.30.70.260">
    <property type="match status" value="1"/>
</dbReference>
<dbReference type="Gene3D" id="3.40.50.300">
    <property type="entry name" value="P-loop containing nucleotide triphosphate hydrolases"/>
    <property type="match status" value="1"/>
</dbReference>
<dbReference type="InterPro" id="IPR003593">
    <property type="entry name" value="AAA+_ATPase"/>
</dbReference>
<dbReference type="InterPro" id="IPR003439">
    <property type="entry name" value="ABC_transporter-like_ATP-bd"/>
</dbReference>
<dbReference type="InterPro" id="IPR017871">
    <property type="entry name" value="ABC_transporter-like_CS"/>
</dbReference>
<dbReference type="InterPro" id="IPR045865">
    <property type="entry name" value="ACT-like_dom_sf"/>
</dbReference>
<dbReference type="InterPro" id="IPR041701">
    <property type="entry name" value="MetN_ABC"/>
</dbReference>
<dbReference type="InterPro" id="IPR050086">
    <property type="entry name" value="MetN_ABC_transporter-like"/>
</dbReference>
<dbReference type="InterPro" id="IPR018449">
    <property type="entry name" value="NIL_domain"/>
</dbReference>
<dbReference type="InterPro" id="IPR027417">
    <property type="entry name" value="P-loop_NTPase"/>
</dbReference>
<dbReference type="PANTHER" id="PTHR43166">
    <property type="entry name" value="AMINO ACID IMPORT ATP-BINDING PROTEIN"/>
    <property type="match status" value="1"/>
</dbReference>
<dbReference type="PANTHER" id="PTHR43166:SF30">
    <property type="entry name" value="METHIONINE IMPORT ATP-BINDING PROTEIN METN"/>
    <property type="match status" value="1"/>
</dbReference>
<dbReference type="Pfam" id="PF00005">
    <property type="entry name" value="ABC_tran"/>
    <property type="match status" value="1"/>
</dbReference>
<dbReference type="Pfam" id="PF09383">
    <property type="entry name" value="NIL"/>
    <property type="match status" value="1"/>
</dbReference>
<dbReference type="SMART" id="SM00382">
    <property type="entry name" value="AAA"/>
    <property type="match status" value="1"/>
</dbReference>
<dbReference type="SMART" id="SM00930">
    <property type="entry name" value="NIL"/>
    <property type="match status" value="1"/>
</dbReference>
<dbReference type="SUPFAM" id="SSF55021">
    <property type="entry name" value="ACT-like"/>
    <property type="match status" value="1"/>
</dbReference>
<dbReference type="SUPFAM" id="SSF52540">
    <property type="entry name" value="P-loop containing nucleoside triphosphate hydrolases"/>
    <property type="match status" value="1"/>
</dbReference>
<dbReference type="PROSITE" id="PS00211">
    <property type="entry name" value="ABC_TRANSPORTER_1"/>
    <property type="match status" value="1"/>
</dbReference>
<dbReference type="PROSITE" id="PS50893">
    <property type="entry name" value="ABC_TRANSPORTER_2"/>
    <property type="match status" value="1"/>
</dbReference>
<dbReference type="PROSITE" id="PS51264">
    <property type="entry name" value="METN"/>
    <property type="match status" value="1"/>
</dbReference>
<evidence type="ECO:0000255" key="1">
    <source>
        <dbReference type="HAMAP-Rule" id="MF_01719"/>
    </source>
</evidence>
<gene>
    <name evidence="1" type="primary">metN</name>
    <name type="ordered locus">LJ_1407</name>
</gene>
<organism>
    <name type="scientific">Lactobacillus johnsonii (strain CNCM I-12250 / La1 / NCC 533)</name>
    <dbReference type="NCBI Taxonomy" id="257314"/>
    <lineage>
        <taxon>Bacteria</taxon>
        <taxon>Bacillati</taxon>
        <taxon>Bacillota</taxon>
        <taxon>Bacilli</taxon>
        <taxon>Lactobacillales</taxon>
        <taxon>Lactobacillaceae</taxon>
        <taxon>Lactobacillus</taxon>
    </lineage>
</organism>
<accession>Q74IV9</accession>
<protein>
    <recommendedName>
        <fullName evidence="1">Methionine import ATP-binding protein MetN</fullName>
        <ecNumber evidence="1">7.4.2.11</ecNumber>
    </recommendedName>
</protein>
<feature type="chain" id="PRO_0000270315" description="Methionine import ATP-binding protein MetN">
    <location>
        <begin position="1"/>
        <end position="349"/>
    </location>
</feature>
<feature type="domain" description="ABC transporter" evidence="1">
    <location>
        <begin position="5"/>
        <end position="245"/>
    </location>
</feature>
<feature type="binding site" evidence="1">
    <location>
        <begin position="37"/>
        <end position="44"/>
    </location>
    <ligand>
        <name>ATP</name>
        <dbReference type="ChEBI" id="CHEBI:30616"/>
    </ligand>
</feature>
<reference key="1">
    <citation type="journal article" date="2004" name="Proc. Natl. Acad. Sci. U.S.A.">
        <title>The genome sequence of the probiotic intestinal bacterium Lactobacillus johnsonii NCC 533.</title>
        <authorList>
            <person name="Pridmore R.D."/>
            <person name="Berger B."/>
            <person name="Desiere F."/>
            <person name="Vilanova D."/>
            <person name="Barretto C."/>
            <person name="Pittet A.-C."/>
            <person name="Zwahlen M.-C."/>
            <person name="Rouvet M."/>
            <person name="Altermann E."/>
            <person name="Barrangou R."/>
            <person name="Mollet B."/>
            <person name="Mercenier A."/>
            <person name="Klaenhammer T."/>
            <person name="Arigoni F."/>
            <person name="Schell M.A."/>
        </authorList>
    </citation>
    <scope>NUCLEOTIDE SEQUENCE [LARGE SCALE GENOMIC DNA]</scope>
    <source>
        <strain>CNCM I-1225 / La1 / NCC 533</strain>
    </source>
</reference>
<sequence length="349" mass="38638">MAAQIDLKNITVQFGQNKAVNDVSLEINKGDIYGVIGFSGAGKSTLVRTINLLQYPSAGSVEVNGTVLFKDNKLQISKKQLQEKRRKIGMIFQNFNLLNEETVIENVAFALQHSRLSDQELEKKSLHLLELVGLKDKADFYPAQLSGGQQQRVAIARALANDPDILISDEATSALDPKTTNQILDLLYDLNKKLGLTVVLITHEMDAVKRVANKIVVMEKGKVIEKGELREVFLHPQKQLTRQFVGGALQAQHILNTYNFDKLAENAELYQLVYSINDVTKSVVADLDVSLNTKASILYGNVEVLSGEPIGTLAILLNLNELKQKEAIKFLESKNVVVTKLDKGVLTND</sequence>
<keyword id="KW-0029">Amino-acid transport</keyword>
<keyword id="KW-0067">ATP-binding</keyword>
<keyword id="KW-1003">Cell membrane</keyword>
<keyword id="KW-0472">Membrane</keyword>
<keyword id="KW-0547">Nucleotide-binding</keyword>
<keyword id="KW-1278">Translocase</keyword>
<keyword id="KW-0813">Transport</keyword>
<comment type="function">
    <text evidence="1">Part of the ABC transporter complex MetNIQ involved in methionine import. Responsible for energy coupling to the transport system.</text>
</comment>
<comment type="catalytic activity">
    <reaction evidence="1">
        <text>L-methionine(out) + ATP + H2O = L-methionine(in) + ADP + phosphate + H(+)</text>
        <dbReference type="Rhea" id="RHEA:29779"/>
        <dbReference type="ChEBI" id="CHEBI:15377"/>
        <dbReference type="ChEBI" id="CHEBI:15378"/>
        <dbReference type="ChEBI" id="CHEBI:30616"/>
        <dbReference type="ChEBI" id="CHEBI:43474"/>
        <dbReference type="ChEBI" id="CHEBI:57844"/>
        <dbReference type="ChEBI" id="CHEBI:456216"/>
        <dbReference type="EC" id="7.4.2.11"/>
    </reaction>
</comment>
<comment type="catalytic activity">
    <reaction evidence="1">
        <text>D-methionine(out) + ATP + H2O = D-methionine(in) + ADP + phosphate + H(+)</text>
        <dbReference type="Rhea" id="RHEA:29767"/>
        <dbReference type="ChEBI" id="CHEBI:15377"/>
        <dbReference type="ChEBI" id="CHEBI:15378"/>
        <dbReference type="ChEBI" id="CHEBI:30616"/>
        <dbReference type="ChEBI" id="CHEBI:43474"/>
        <dbReference type="ChEBI" id="CHEBI:57932"/>
        <dbReference type="ChEBI" id="CHEBI:456216"/>
        <dbReference type="EC" id="7.4.2.11"/>
    </reaction>
</comment>
<comment type="subunit">
    <text evidence="1">The complex is composed of two ATP-binding proteins (MetN), two transmembrane proteins (MetI) and a solute-binding protein (MetQ).</text>
</comment>
<comment type="subcellular location">
    <subcellularLocation>
        <location evidence="1">Cell membrane</location>
        <topology evidence="1">Peripheral membrane protein</topology>
    </subcellularLocation>
</comment>
<comment type="similarity">
    <text evidence="1">Belongs to the ABC transporter superfamily. Methionine importer (TC 3.A.1.24) family.</text>
</comment>
<name>METN_LACJO</name>